<reference key="1">
    <citation type="journal article" date="2002" name="Nucleic Acids Res.">
        <title>The complete genomic sequence of Mycoplasma penetrans, an intracellular bacterial pathogen in humans.</title>
        <authorList>
            <person name="Sasaki Y."/>
            <person name="Ishikawa J."/>
            <person name="Yamashita A."/>
            <person name="Oshima K."/>
            <person name="Kenri T."/>
            <person name="Furuya K."/>
            <person name="Yoshino C."/>
            <person name="Horino A."/>
            <person name="Shiba T."/>
            <person name="Sasaki T."/>
            <person name="Hattori M."/>
        </authorList>
    </citation>
    <scope>NUCLEOTIDE SEQUENCE [LARGE SCALE GENOMIC DNA]</scope>
    <source>
        <strain>HF-2</strain>
    </source>
</reference>
<feature type="chain" id="PRO_0000187419" description="Large ribosomal subunit protein bL34">
    <location>
        <begin position="1"/>
        <end position="47"/>
    </location>
</feature>
<feature type="region of interest" description="Disordered" evidence="2">
    <location>
        <begin position="20"/>
        <end position="47"/>
    </location>
</feature>
<feature type="compositionally biased region" description="Basic residues" evidence="2">
    <location>
        <begin position="31"/>
        <end position="40"/>
    </location>
</feature>
<keyword id="KW-1185">Reference proteome</keyword>
<keyword id="KW-0687">Ribonucleoprotein</keyword>
<keyword id="KW-0689">Ribosomal protein</keyword>
<accession>Q8EU89</accession>
<sequence length="47" mass="5725">MKRTYQPNKKRRVKKHGFLNRMSTSDGREVIRRRRQKGRHSLTVSDQ</sequence>
<organism>
    <name type="scientific">Malacoplasma penetrans (strain HF-2)</name>
    <name type="common">Mycoplasma penetrans</name>
    <dbReference type="NCBI Taxonomy" id="272633"/>
    <lineage>
        <taxon>Bacteria</taxon>
        <taxon>Bacillati</taxon>
        <taxon>Mycoplasmatota</taxon>
        <taxon>Mycoplasmoidales</taxon>
        <taxon>Mycoplasmoidaceae</taxon>
        <taxon>Malacoplasma</taxon>
    </lineage>
</organism>
<dbReference type="EMBL" id="BA000026">
    <property type="protein sequence ID" value="BAC44827.1"/>
    <property type="molecule type" value="Genomic_DNA"/>
</dbReference>
<dbReference type="RefSeq" id="WP_011077855.1">
    <property type="nucleotide sequence ID" value="NC_004432.1"/>
</dbReference>
<dbReference type="SMR" id="Q8EU89"/>
<dbReference type="FunCoup" id="Q8EU89">
    <property type="interactions" value="129"/>
</dbReference>
<dbReference type="STRING" id="272633.gene:10732161"/>
<dbReference type="KEGG" id="mpe:MYPE10420"/>
<dbReference type="eggNOG" id="COG0230">
    <property type="taxonomic scope" value="Bacteria"/>
</dbReference>
<dbReference type="HOGENOM" id="CLU_129938_2_0_14"/>
<dbReference type="InParanoid" id="Q8EU89"/>
<dbReference type="Proteomes" id="UP000002522">
    <property type="component" value="Chromosome"/>
</dbReference>
<dbReference type="GO" id="GO:1990904">
    <property type="term" value="C:ribonucleoprotein complex"/>
    <property type="evidence" value="ECO:0007669"/>
    <property type="project" value="UniProtKB-KW"/>
</dbReference>
<dbReference type="GO" id="GO:0005840">
    <property type="term" value="C:ribosome"/>
    <property type="evidence" value="ECO:0007669"/>
    <property type="project" value="UniProtKB-KW"/>
</dbReference>
<dbReference type="GO" id="GO:0003735">
    <property type="term" value="F:structural constituent of ribosome"/>
    <property type="evidence" value="ECO:0007669"/>
    <property type="project" value="InterPro"/>
</dbReference>
<dbReference type="GO" id="GO:0006412">
    <property type="term" value="P:translation"/>
    <property type="evidence" value="ECO:0007669"/>
    <property type="project" value="UniProtKB-UniRule"/>
</dbReference>
<dbReference type="FunFam" id="1.10.287.3980:FF:000001">
    <property type="entry name" value="Mitochondrial ribosomal protein L34"/>
    <property type="match status" value="1"/>
</dbReference>
<dbReference type="Gene3D" id="1.10.287.3980">
    <property type="match status" value="1"/>
</dbReference>
<dbReference type="HAMAP" id="MF_00391">
    <property type="entry name" value="Ribosomal_bL34"/>
    <property type="match status" value="1"/>
</dbReference>
<dbReference type="InterPro" id="IPR000271">
    <property type="entry name" value="Ribosomal_bL34"/>
</dbReference>
<dbReference type="InterPro" id="IPR020939">
    <property type="entry name" value="Ribosomal_bL34_CS"/>
</dbReference>
<dbReference type="NCBIfam" id="TIGR01030">
    <property type="entry name" value="rpmH_bact"/>
    <property type="match status" value="1"/>
</dbReference>
<dbReference type="PANTHER" id="PTHR14503:SF4">
    <property type="entry name" value="LARGE RIBOSOMAL SUBUNIT PROTEIN BL34M"/>
    <property type="match status" value="1"/>
</dbReference>
<dbReference type="PANTHER" id="PTHR14503">
    <property type="entry name" value="MITOCHONDRIAL RIBOSOMAL PROTEIN 34 FAMILY MEMBER"/>
    <property type="match status" value="1"/>
</dbReference>
<dbReference type="Pfam" id="PF00468">
    <property type="entry name" value="Ribosomal_L34"/>
    <property type="match status" value="1"/>
</dbReference>
<dbReference type="PROSITE" id="PS00784">
    <property type="entry name" value="RIBOSOMAL_L34"/>
    <property type="match status" value="1"/>
</dbReference>
<proteinExistence type="inferred from homology"/>
<evidence type="ECO:0000255" key="1">
    <source>
        <dbReference type="HAMAP-Rule" id="MF_00391"/>
    </source>
</evidence>
<evidence type="ECO:0000256" key="2">
    <source>
        <dbReference type="SAM" id="MobiDB-lite"/>
    </source>
</evidence>
<evidence type="ECO:0000305" key="3"/>
<gene>
    <name evidence="1" type="primary">rpmH</name>
    <name type="ordered locus">MYPE10420</name>
</gene>
<comment type="similarity">
    <text evidence="1">Belongs to the bacterial ribosomal protein bL34 family.</text>
</comment>
<protein>
    <recommendedName>
        <fullName evidence="1">Large ribosomal subunit protein bL34</fullName>
    </recommendedName>
    <alternativeName>
        <fullName evidence="3">50S ribosomal protein L34</fullName>
    </alternativeName>
</protein>
<name>RL34_MALP2</name>